<sequence>MALPLAFLFTSPGPVLVEIGPITIRWYGLLIATAVLIGVSLSQYLAKRRQVNPDLLSDLSIWLVIGAIPAARIYYVLFQWSEYAQHPERIIAIWQGGIAIHGAIIGGTLAALIFAKLKRVPFWQLADLVAPSLILGQAIGRWGNFFNSEAFGRPTNLPWKLYIPIERRPPDLVSFEYFHPTFLYESIWDLMVFALLITLFFRSLAGKPRLKVGTLFMVYLATYSLGRLWIEGLRTDSLMLGPLRIAQVVSLTGIALGLAGLAWLYVRKRPLPDVVPSAKDTGE</sequence>
<keyword id="KW-0997">Cell inner membrane</keyword>
<keyword id="KW-1003">Cell membrane</keyword>
<keyword id="KW-0472">Membrane</keyword>
<keyword id="KW-1185">Reference proteome</keyword>
<keyword id="KW-0808">Transferase</keyword>
<keyword id="KW-0812">Transmembrane</keyword>
<keyword id="KW-1133">Transmembrane helix</keyword>
<feature type="chain" id="PRO_0000172541" description="Phosphatidylglycerol--prolipoprotein diacylglyceryl transferase">
    <location>
        <begin position="1"/>
        <end position="283"/>
    </location>
</feature>
<feature type="transmembrane region" description="Helical" evidence="1">
    <location>
        <begin position="19"/>
        <end position="39"/>
    </location>
</feature>
<feature type="transmembrane region" description="Helical" evidence="1">
    <location>
        <begin position="59"/>
        <end position="79"/>
    </location>
</feature>
<feature type="transmembrane region" description="Helical" evidence="1">
    <location>
        <begin position="90"/>
        <end position="110"/>
    </location>
</feature>
<feature type="transmembrane region" description="Helical" evidence="1">
    <location>
        <begin position="120"/>
        <end position="140"/>
    </location>
</feature>
<feature type="transmembrane region" description="Helical" evidence="1">
    <location>
        <begin position="181"/>
        <end position="201"/>
    </location>
</feature>
<feature type="transmembrane region" description="Helical" evidence="1">
    <location>
        <begin position="212"/>
        <end position="232"/>
    </location>
</feature>
<feature type="transmembrane region" description="Helical" evidence="1">
    <location>
        <begin position="245"/>
        <end position="265"/>
    </location>
</feature>
<feature type="binding site" evidence="1">
    <location>
        <position position="141"/>
    </location>
    <ligand>
        <name>a 1,2-diacyl-sn-glycero-3-phospho-(1'-sn-glycerol)</name>
        <dbReference type="ChEBI" id="CHEBI:64716"/>
    </ligand>
</feature>
<organism>
    <name type="scientific">Nostoc sp. (strain PCC 7120 / SAG 25.82 / UTEX 2576)</name>
    <dbReference type="NCBI Taxonomy" id="103690"/>
    <lineage>
        <taxon>Bacteria</taxon>
        <taxon>Bacillati</taxon>
        <taxon>Cyanobacteriota</taxon>
        <taxon>Cyanophyceae</taxon>
        <taxon>Nostocales</taxon>
        <taxon>Nostocaceae</taxon>
        <taxon>Nostoc</taxon>
    </lineage>
</organism>
<name>LGT_NOSS1</name>
<reference key="1">
    <citation type="journal article" date="2001" name="DNA Res.">
        <title>Complete genomic sequence of the filamentous nitrogen-fixing cyanobacterium Anabaena sp. strain PCC 7120.</title>
        <authorList>
            <person name="Kaneko T."/>
            <person name="Nakamura Y."/>
            <person name="Wolk C.P."/>
            <person name="Kuritz T."/>
            <person name="Sasamoto S."/>
            <person name="Watanabe A."/>
            <person name="Iriguchi M."/>
            <person name="Ishikawa A."/>
            <person name="Kawashima K."/>
            <person name="Kimura T."/>
            <person name="Kishida Y."/>
            <person name="Kohara M."/>
            <person name="Matsumoto M."/>
            <person name="Matsuno A."/>
            <person name="Muraki A."/>
            <person name="Nakazaki N."/>
            <person name="Shimpo S."/>
            <person name="Sugimoto M."/>
            <person name="Takazawa M."/>
            <person name="Yamada M."/>
            <person name="Yasuda M."/>
            <person name="Tabata S."/>
        </authorList>
    </citation>
    <scope>NUCLEOTIDE SEQUENCE [LARGE SCALE GENOMIC DNA]</scope>
    <source>
        <strain>PCC 7120 / SAG 25.82 / UTEX 2576</strain>
    </source>
</reference>
<dbReference type="EC" id="2.5.1.145" evidence="1"/>
<dbReference type="EMBL" id="BA000019">
    <property type="protein sequence ID" value="BAB76398.1"/>
    <property type="molecule type" value="Genomic_DNA"/>
</dbReference>
<dbReference type="PIR" id="AC2393">
    <property type="entry name" value="AC2393"/>
</dbReference>
<dbReference type="RefSeq" id="WP_010998830.1">
    <property type="nucleotide sequence ID" value="NZ_RSCN01000020.1"/>
</dbReference>
<dbReference type="SMR" id="Q8YN71"/>
<dbReference type="STRING" id="103690.gene:10496752"/>
<dbReference type="KEGG" id="ana:all4699"/>
<dbReference type="eggNOG" id="COG0682">
    <property type="taxonomic scope" value="Bacteria"/>
</dbReference>
<dbReference type="OrthoDB" id="871140at2"/>
<dbReference type="UniPathway" id="UPA00664"/>
<dbReference type="Proteomes" id="UP000002483">
    <property type="component" value="Chromosome"/>
</dbReference>
<dbReference type="GO" id="GO:0005886">
    <property type="term" value="C:plasma membrane"/>
    <property type="evidence" value="ECO:0007669"/>
    <property type="project" value="UniProtKB-SubCell"/>
</dbReference>
<dbReference type="GO" id="GO:0008961">
    <property type="term" value="F:phosphatidylglycerol-prolipoprotein diacylglyceryl transferase activity"/>
    <property type="evidence" value="ECO:0007669"/>
    <property type="project" value="UniProtKB-UniRule"/>
</dbReference>
<dbReference type="GO" id="GO:0042158">
    <property type="term" value="P:lipoprotein biosynthetic process"/>
    <property type="evidence" value="ECO:0007669"/>
    <property type="project" value="UniProtKB-UniRule"/>
</dbReference>
<dbReference type="HAMAP" id="MF_01147">
    <property type="entry name" value="Lgt"/>
    <property type="match status" value="1"/>
</dbReference>
<dbReference type="InterPro" id="IPR001640">
    <property type="entry name" value="Lgt"/>
</dbReference>
<dbReference type="NCBIfam" id="TIGR00544">
    <property type="entry name" value="lgt"/>
    <property type="match status" value="1"/>
</dbReference>
<dbReference type="PANTHER" id="PTHR30589:SF0">
    <property type="entry name" value="PHOSPHATIDYLGLYCEROL--PROLIPOPROTEIN DIACYLGLYCERYL TRANSFERASE"/>
    <property type="match status" value="1"/>
</dbReference>
<dbReference type="PANTHER" id="PTHR30589">
    <property type="entry name" value="PROLIPOPROTEIN DIACYLGLYCERYL TRANSFERASE"/>
    <property type="match status" value="1"/>
</dbReference>
<dbReference type="Pfam" id="PF01790">
    <property type="entry name" value="LGT"/>
    <property type="match status" value="1"/>
</dbReference>
<dbReference type="PROSITE" id="PS01311">
    <property type="entry name" value="LGT"/>
    <property type="match status" value="1"/>
</dbReference>
<proteinExistence type="inferred from homology"/>
<comment type="function">
    <text evidence="1">Catalyzes the transfer of the diacylglyceryl group from phosphatidylglycerol to the sulfhydryl group of the N-terminal cysteine of a prolipoprotein, the first step in the formation of mature lipoproteins.</text>
</comment>
<comment type="catalytic activity">
    <reaction evidence="1">
        <text>L-cysteinyl-[prolipoprotein] + a 1,2-diacyl-sn-glycero-3-phospho-(1'-sn-glycerol) = an S-1,2-diacyl-sn-glyceryl-L-cysteinyl-[prolipoprotein] + sn-glycerol 1-phosphate + H(+)</text>
        <dbReference type="Rhea" id="RHEA:56712"/>
        <dbReference type="Rhea" id="RHEA-COMP:14679"/>
        <dbReference type="Rhea" id="RHEA-COMP:14680"/>
        <dbReference type="ChEBI" id="CHEBI:15378"/>
        <dbReference type="ChEBI" id="CHEBI:29950"/>
        <dbReference type="ChEBI" id="CHEBI:57685"/>
        <dbReference type="ChEBI" id="CHEBI:64716"/>
        <dbReference type="ChEBI" id="CHEBI:140658"/>
        <dbReference type="EC" id="2.5.1.145"/>
    </reaction>
</comment>
<comment type="pathway">
    <text evidence="1">Protein modification; lipoprotein biosynthesis (diacylglyceryl transfer).</text>
</comment>
<comment type="subcellular location">
    <subcellularLocation>
        <location evidence="1">Cell inner membrane</location>
        <topology evidence="1">Multi-pass membrane protein</topology>
    </subcellularLocation>
</comment>
<comment type="similarity">
    <text evidence="1">Belongs to the Lgt family.</text>
</comment>
<gene>
    <name evidence="1" type="primary">lgt</name>
    <name type="ordered locus">all4699</name>
</gene>
<accession>Q8YN71</accession>
<protein>
    <recommendedName>
        <fullName evidence="1">Phosphatidylglycerol--prolipoprotein diacylglyceryl transferase</fullName>
        <ecNumber evidence="1">2.5.1.145</ecNumber>
    </recommendedName>
</protein>
<evidence type="ECO:0000255" key="1">
    <source>
        <dbReference type="HAMAP-Rule" id="MF_01147"/>
    </source>
</evidence>